<reference key="1">
    <citation type="journal article" date="2003" name="J. Neurochem.">
        <title>Novel excitatory Conus peptides define a new conotoxin superfamily.</title>
        <authorList>
            <person name="Jimenez E.C."/>
            <person name="Shetty R.P."/>
            <person name="Lirazan M."/>
            <person name="Rivier J."/>
            <person name="Walker C."/>
            <person name="Abogadie F.C."/>
            <person name="Yoshikami D."/>
            <person name="Cruz L.J."/>
            <person name="Olivera B.M."/>
        </authorList>
    </citation>
    <scope>NUCLEOTIDE SEQUENCE [MRNA]</scope>
    <source>
        <tissue>Venom duct</tissue>
    </source>
</reference>
<protein>
    <recommendedName>
        <fullName>Iota-conotoxin-like R11.7</fullName>
    </recommendedName>
</protein>
<dbReference type="EMBL" id="AY208958">
    <property type="protein sequence ID" value="AAP41540.1"/>
    <property type="molecule type" value="mRNA"/>
</dbReference>
<dbReference type="SMR" id="Q7Z095"/>
<dbReference type="ConoServer" id="839">
    <property type="toxin name" value="R11.7"/>
</dbReference>
<dbReference type="GO" id="GO:0005576">
    <property type="term" value="C:extracellular region"/>
    <property type="evidence" value="ECO:0007669"/>
    <property type="project" value="UniProtKB-SubCell"/>
</dbReference>
<dbReference type="GO" id="GO:0017080">
    <property type="term" value="F:sodium channel regulator activity"/>
    <property type="evidence" value="ECO:0007669"/>
    <property type="project" value="UniProtKB-KW"/>
</dbReference>
<dbReference type="GO" id="GO:0090729">
    <property type="term" value="F:toxin activity"/>
    <property type="evidence" value="ECO:0007669"/>
    <property type="project" value="UniProtKB-KW"/>
</dbReference>
<dbReference type="Gene3D" id="4.10.40.80">
    <property type="match status" value="1"/>
</dbReference>
<dbReference type="InterPro" id="IPR013141">
    <property type="entry name" value="Conotoxin-I_CS"/>
</dbReference>
<dbReference type="InterPro" id="IPR012624">
    <property type="entry name" value="Toxin_19"/>
</dbReference>
<dbReference type="Pfam" id="PF08088">
    <property type="entry name" value="Toxin_19"/>
    <property type="match status" value="1"/>
</dbReference>
<dbReference type="PROSITE" id="PS60019">
    <property type="entry name" value="I_CONOTOXIN"/>
    <property type="match status" value="1"/>
</dbReference>
<comment type="function">
    <text evidence="1">Iota-conotoxins bind to voltage-gated sodium channels (Nav) and act as agonists by shifting the voltage-dependence of activation to more hyperpolarized levels. Produces general excitatory symptoms (By similarity).</text>
</comment>
<comment type="subcellular location">
    <subcellularLocation>
        <location evidence="1">Secreted</location>
    </subcellularLocation>
</comment>
<comment type="tissue specificity">
    <text>Expressed by the venom duct.</text>
</comment>
<comment type="domain">
    <text>The cysteine framework is XI (C-C-CC-CC-C-C).</text>
</comment>
<comment type="similarity">
    <text evidence="3">Belongs to the conotoxin I1 superfamily.</text>
</comment>
<sequence length="46" mass="4952">GPSFCKADEKPCEYHSDCCNCCLSGICAPSTNWILPGCSTSSFFKI</sequence>
<name>I1B7_CONRA</name>
<evidence type="ECO:0000250" key="1"/>
<evidence type="ECO:0000250" key="2">
    <source>
        <dbReference type="UniProtKB" id="Q7Z094"/>
    </source>
</evidence>
<evidence type="ECO:0000305" key="3"/>
<keyword id="KW-0208">D-amino acid</keyword>
<keyword id="KW-1015">Disulfide bond</keyword>
<keyword id="KW-0379">Hydroxylation</keyword>
<keyword id="KW-0872">Ion channel impairing toxin</keyword>
<keyword id="KW-0528">Neurotoxin</keyword>
<keyword id="KW-0964">Secreted</keyword>
<keyword id="KW-0800">Toxin</keyword>
<keyword id="KW-0738">Voltage-gated sodium channel impairing toxin</keyword>
<proteinExistence type="evidence at transcript level"/>
<feature type="chain" id="PRO_0000086869" description="Iota-conotoxin-like R11.7">
    <location>
        <begin position="1"/>
        <end position="46"/>
    </location>
</feature>
<feature type="modified residue" description="4-hydroxyproline" evidence="1">
    <location>
        <position position="2"/>
    </location>
</feature>
<feature type="modified residue" description="4-hydroxyproline" evidence="1">
    <location>
        <position position="11"/>
    </location>
</feature>
<feature type="modified residue" description="4-hydroxyproline" evidence="1">
    <location>
        <position position="29"/>
    </location>
</feature>
<feature type="modified residue" description="D-phenylalanine" evidence="1">
    <location>
        <position position="44"/>
    </location>
</feature>
<feature type="disulfide bond" evidence="2">
    <location>
        <begin position="5"/>
        <end position="19"/>
    </location>
</feature>
<feature type="disulfide bond" evidence="2">
    <location>
        <begin position="12"/>
        <end position="22"/>
    </location>
</feature>
<feature type="disulfide bond" evidence="2">
    <location>
        <begin position="18"/>
        <end position="27"/>
    </location>
</feature>
<feature type="disulfide bond" evidence="2">
    <location>
        <begin position="21"/>
        <end position="38"/>
    </location>
</feature>
<organism>
    <name type="scientific">Conus radiatus</name>
    <name type="common">Rayed cone</name>
    <dbReference type="NCBI Taxonomy" id="61198"/>
    <lineage>
        <taxon>Eukaryota</taxon>
        <taxon>Metazoa</taxon>
        <taxon>Spiralia</taxon>
        <taxon>Lophotrochozoa</taxon>
        <taxon>Mollusca</taxon>
        <taxon>Gastropoda</taxon>
        <taxon>Caenogastropoda</taxon>
        <taxon>Neogastropoda</taxon>
        <taxon>Conoidea</taxon>
        <taxon>Conidae</taxon>
        <taxon>Conus</taxon>
        <taxon>Phasmoconus</taxon>
    </lineage>
</organism>
<accession>Q7Z095</accession>